<name>EFG2_PSEPK</name>
<feature type="chain" id="PRO_0000091187" description="Elongation factor G 2">
    <location>
        <begin position="1"/>
        <end position="703"/>
    </location>
</feature>
<feature type="domain" description="tr-type G">
    <location>
        <begin position="8"/>
        <end position="291"/>
    </location>
</feature>
<feature type="binding site" evidence="1">
    <location>
        <begin position="17"/>
        <end position="24"/>
    </location>
    <ligand>
        <name>GTP</name>
        <dbReference type="ChEBI" id="CHEBI:37565"/>
    </ligand>
</feature>
<feature type="binding site" evidence="1">
    <location>
        <begin position="89"/>
        <end position="93"/>
    </location>
    <ligand>
        <name>GTP</name>
        <dbReference type="ChEBI" id="CHEBI:37565"/>
    </ligand>
</feature>
<feature type="binding site" evidence="1">
    <location>
        <begin position="143"/>
        <end position="146"/>
    </location>
    <ligand>
        <name>GTP</name>
        <dbReference type="ChEBI" id="CHEBI:37565"/>
    </ligand>
</feature>
<feature type="helix" evidence="2">
    <location>
        <begin position="7"/>
        <end position="9"/>
    </location>
</feature>
<feature type="strand" evidence="2">
    <location>
        <begin position="10"/>
        <end position="17"/>
    </location>
</feature>
<feature type="strand" evidence="2">
    <location>
        <begin position="19"/>
        <end position="21"/>
    </location>
</feature>
<feature type="helix" evidence="2">
    <location>
        <begin position="23"/>
        <end position="35"/>
    </location>
</feature>
<feature type="strand" evidence="2">
    <location>
        <begin position="67"/>
        <end position="72"/>
    </location>
</feature>
<feature type="strand" evidence="2">
    <location>
        <begin position="79"/>
        <end position="81"/>
    </location>
</feature>
<feature type="strand" evidence="2">
    <location>
        <begin position="83"/>
        <end position="88"/>
    </location>
</feature>
<feature type="helix" evidence="2">
    <location>
        <begin position="97"/>
        <end position="106"/>
    </location>
</feature>
<feature type="strand" evidence="2">
    <location>
        <begin position="108"/>
        <end position="115"/>
    </location>
</feature>
<feature type="turn" evidence="2">
    <location>
        <begin position="116"/>
        <end position="118"/>
    </location>
</feature>
<feature type="helix" evidence="2">
    <location>
        <begin position="122"/>
        <end position="133"/>
    </location>
</feature>
<feature type="strand" evidence="2">
    <location>
        <begin position="138"/>
        <end position="143"/>
    </location>
</feature>
<feature type="helix" evidence="2">
    <location>
        <begin position="152"/>
        <end position="161"/>
    </location>
</feature>
<feature type="strand" evidence="2">
    <location>
        <begin position="167"/>
        <end position="175"/>
    </location>
</feature>
<feature type="helix" evidence="2">
    <location>
        <begin position="177"/>
        <end position="179"/>
    </location>
</feature>
<feature type="strand" evidence="2">
    <location>
        <begin position="182"/>
        <end position="185"/>
    </location>
</feature>
<feature type="turn" evidence="2">
    <location>
        <begin position="186"/>
        <end position="188"/>
    </location>
</feature>
<feature type="strand" evidence="2">
    <location>
        <begin position="191"/>
        <end position="194"/>
    </location>
</feature>
<feature type="helix" evidence="2">
    <location>
        <begin position="196"/>
        <end position="198"/>
    </location>
</feature>
<feature type="strand" evidence="2">
    <location>
        <begin position="201"/>
        <end position="206"/>
    </location>
</feature>
<feature type="helix" evidence="2">
    <location>
        <begin position="210"/>
        <end position="228"/>
    </location>
</feature>
<feature type="helix" evidence="2">
    <location>
        <begin position="232"/>
        <end position="239"/>
    </location>
</feature>
<feature type="helix" evidence="2">
    <location>
        <begin position="246"/>
        <end position="258"/>
    </location>
</feature>
<feature type="strand" evidence="2">
    <location>
        <begin position="263"/>
        <end position="267"/>
    </location>
</feature>
<feature type="turn" evidence="2">
    <location>
        <begin position="270"/>
        <end position="273"/>
    </location>
</feature>
<feature type="helix" evidence="2">
    <location>
        <begin position="276"/>
        <end position="286"/>
    </location>
</feature>
<feature type="turn" evidence="2">
    <location>
        <begin position="290"/>
        <end position="292"/>
    </location>
</feature>
<feature type="strand" evidence="2">
    <location>
        <begin position="296"/>
        <end position="300"/>
    </location>
</feature>
<feature type="strand" evidence="2">
    <location>
        <begin position="303"/>
        <end position="310"/>
    </location>
</feature>
<feature type="strand" evidence="2">
    <location>
        <begin position="319"/>
        <end position="328"/>
    </location>
</feature>
<feature type="turn" evidence="2">
    <location>
        <begin position="329"/>
        <end position="331"/>
    </location>
</feature>
<feature type="strand" evidence="2">
    <location>
        <begin position="332"/>
        <end position="345"/>
    </location>
</feature>
<feature type="strand" evidence="2">
    <location>
        <begin position="349"/>
        <end position="352"/>
    </location>
</feature>
<feature type="turn" evidence="2">
    <location>
        <begin position="353"/>
        <end position="355"/>
    </location>
</feature>
<feature type="strand" evidence="2">
    <location>
        <begin position="358"/>
        <end position="360"/>
    </location>
</feature>
<feature type="strand" evidence="2">
    <location>
        <begin position="364"/>
        <end position="367"/>
    </location>
</feature>
<feature type="strand" evidence="2">
    <location>
        <begin position="372"/>
        <end position="379"/>
    </location>
</feature>
<feature type="strand" evidence="2">
    <location>
        <begin position="383"/>
        <end position="388"/>
    </location>
</feature>
<feature type="strand" evidence="2">
    <location>
        <begin position="397"/>
        <end position="399"/>
    </location>
</feature>
<feature type="strand" evidence="2">
    <location>
        <begin position="401"/>
        <end position="403"/>
    </location>
</feature>
<feature type="strand" evidence="2">
    <location>
        <begin position="406"/>
        <end position="408"/>
    </location>
</feature>
<feature type="strand" evidence="2">
    <location>
        <begin position="417"/>
        <end position="425"/>
    </location>
</feature>
<feature type="helix" evidence="2">
    <location>
        <begin position="426"/>
        <end position="442"/>
    </location>
</feature>
<feature type="strand" evidence="2">
    <location>
        <begin position="447"/>
        <end position="450"/>
    </location>
</feature>
<feature type="turn" evidence="2">
    <location>
        <begin position="452"/>
        <end position="454"/>
    </location>
</feature>
<feature type="strand" evidence="2">
    <location>
        <begin position="457"/>
        <end position="463"/>
    </location>
</feature>
<feature type="helix" evidence="2">
    <location>
        <begin position="464"/>
        <end position="476"/>
    </location>
</feature>
<feature type="strand" evidence="2">
    <location>
        <begin position="482"/>
        <end position="484"/>
    </location>
</feature>
<feature type="strand" evidence="2">
    <location>
        <begin position="492"/>
        <end position="494"/>
    </location>
</feature>
<feature type="strand" evidence="2">
    <location>
        <begin position="499"/>
        <end position="507"/>
    </location>
</feature>
<feature type="strand" evidence="2">
    <location>
        <begin position="509"/>
        <end position="511"/>
    </location>
</feature>
<feature type="strand" evidence="2">
    <location>
        <begin position="514"/>
        <end position="523"/>
    </location>
</feature>
<feature type="strand" evidence="2">
    <location>
        <begin position="531"/>
        <end position="538"/>
    </location>
</feature>
<feature type="strand" evidence="2">
    <location>
        <begin position="541"/>
        <end position="543"/>
    </location>
</feature>
<feature type="helix" evidence="2">
    <location>
        <begin position="545"/>
        <end position="547"/>
    </location>
</feature>
<feature type="helix" evidence="2">
    <location>
        <begin position="548"/>
        <end position="561"/>
    </location>
</feature>
<feature type="strand" evidence="2">
    <location>
        <begin position="563"/>
        <end position="566"/>
    </location>
</feature>
<feature type="strand" evidence="2">
    <location>
        <begin position="569"/>
        <end position="579"/>
    </location>
</feature>
<feature type="turn" evidence="2">
    <location>
        <begin position="583"/>
        <end position="585"/>
    </location>
</feature>
<feature type="helix" evidence="2">
    <location>
        <begin position="588"/>
        <end position="600"/>
    </location>
</feature>
<feature type="helix" evidence="2">
    <location>
        <begin position="602"/>
        <end position="605"/>
    </location>
</feature>
<feature type="strand" evidence="2">
    <location>
        <begin position="609"/>
        <end position="621"/>
    </location>
</feature>
<feature type="helix" evidence="2">
    <location>
        <begin position="623"/>
        <end position="625"/>
    </location>
</feature>
<feature type="helix" evidence="2">
    <location>
        <begin position="626"/>
        <end position="635"/>
    </location>
</feature>
<feature type="strand" evidence="2">
    <location>
        <begin position="644"/>
        <end position="646"/>
    </location>
</feature>
<feature type="strand" evidence="2">
    <location>
        <begin position="649"/>
        <end position="657"/>
    </location>
</feature>
<feature type="helix" evidence="2">
    <location>
        <begin position="658"/>
        <end position="660"/>
    </location>
</feature>
<feature type="helix" evidence="2">
    <location>
        <begin position="664"/>
        <end position="672"/>
    </location>
</feature>
<feature type="strand" evidence="2">
    <location>
        <begin position="677"/>
        <end position="687"/>
    </location>
</feature>
<feature type="helix" evidence="2">
    <location>
        <begin position="690"/>
        <end position="697"/>
    </location>
</feature>
<organism>
    <name type="scientific">Pseudomonas putida (strain ATCC 47054 / DSM 6125 / CFBP 8728 / NCIMB 11950 / KT2440)</name>
    <dbReference type="NCBI Taxonomy" id="160488"/>
    <lineage>
        <taxon>Bacteria</taxon>
        <taxon>Pseudomonadati</taxon>
        <taxon>Pseudomonadota</taxon>
        <taxon>Gammaproteobacteria</taxon>
        <taxon>Pseudomonadales</taxon>
        <taxon>Pseudomonadaceae</taxon>
        <taxon>Pseudomonas</taxon>
    </lineage>
</organism>
<gene>
    <name type="primary">fusB</name>
    <name type="synonym">fusA-2</name>
    <name type="ordered locus">PP_4111</name>
</gene>
<sequence length="703" mass="77833">MARTTPIELYRNIGIVAHVDAGKTTTTERILFYTGVNHKMGEVHDGAATMDWMAQEQERGITITSAATTAFWQGSTKQFAHKYRFNIIDTPGHVDFTIEVERSLRVLDGAVVVFSGADGVEPQSETVWRQANKYHVPRLAYINKMDRQGADFLRVVKQIDQRLGHHPVPIQLAIGSEENFMGQIDLVKMKAIYWNDADQGTSYREEEIPAELKALADEWRAHMIEAAAEANDELTMKFLDGEELSIEEIKAGLRQRTIANEIVPTILGSSFKNKGVPLMLDAVIDYLPAPSEIPAIRGTDPDDEEKHLERHADDKEPFSALAFKIATDPFVGTLTFARVYSGVLSSGNAVLNSVKGKKERIGRMVQMHANQRAEIKDVCAGDIAALIGMKDVTTGDTLCDMDKPIILERMDFPDPVISVAVEPKTKADQEKMGIALGKLAQEDPSFRVRTDEETGQTIISGMGELHLDIIVDRMRREFNVEANIGKPQVAYREKIRNTCEIEGRFVRQSGGRGQYGHCWIRFAPGDEGKEGLEFINEIVGGVVPREYIPAIQKGIEEQMKNGVLAGYPLINLKAAVFDGSYHDVDSNEMAYKIAASMATKQLSQKGGAVLLEPVMKVEVVTPEEYQGDILGDLSRRRGMIQDGDETPAGKVIRAEVPLGEMFGYATSMRSMTQGRASFSMEFTRYAEAPASIADGIVKKSRGE</sequence>
<accession>Q88FI4</accession>
<evidence type="ECO:0000255" key="1">
    <source>
        <dbReference type="HAMAP-Rule" id="MF_00054"/>
    </source>
</evidence>
<evidence type="ECO:0007829" key="2">
    <source>
        <dbReference type="PDB" id="6N0I"/>
    </source>
</evidence>
<dbReference type="EMBL" id="AE015451">
    <property type="protein sequence ID" value="AAN69695.1"/>
    <property type="molecule type" value="Genomic_DNA"/>
</dbReference>
<dbReference type="RefSeq" id="NP_746231.1">
    <property type="nucleotide sequence ID" value="NC_002947.4"/>
</dbReference>
<dbReference type="PDB" id="6N0I">
    <property type="method" value="X-ray"/>
    <property type="resolution" value="2.60 A"/>
    <property type="chains" value="A/B=1-703"/>
</dbReference>
<dbReference type="PDBsum" id="6N0I"/>
<dbReference type="SMR" id="Q88FI4"/>
<dbReference type="STRING" id="160488.PP_4111"/>
<dbReference type="PaxDb" id="160488-PP_4111"/>
<dbReference type="KEGG" id="ppu:PP_4111"/>
<dbReference type="PATRIC" id="fig|160488.4.peg.4369"/>
<dbReference type="eggNOG" id="COG0480">
    <property type="taxonomic scope" value="Bacteria"/>
</dbReference>
<dbReference type="HOGENOM" id="CLU_002794_4_1_6"/>
<dbReference type="OrthoDB" id="9804431at2"/>
<dbReference type="PhylomeDB" id="Q88FI4"/>
<dbReference type="BioCyc" id="PPUT160488:G1G01-4378-MONOMER"/>
<dbReference type="Proteomes" id="UP000000556">
    <property type="component" value="Chromosome"/>
</dbReference>
<dbReference type="GO" id="GO:0005737">
    <property type="term" value="C:cytoplasm"/>
    <property type="evidence" value="ECO:0007669"/>
    <property type="project" value="UniProtKB-SubCell"/>
</dbReference>
<dbReference type="GO" id="GO:0005525">
    <property type="term" value="F:GTP binding"/>
    <property type="evidence" value="ECO:0007669"/>
    <property type="project" value="UniProtKB-UniRule"/>
</dbReference>
<dbReference type="GO" id="GO:0003924">
    <property type="term" value="F:GTPase activity"/>
    <property type="evidence" value="ECO:0007669"/>
    <property type="project" value="InterPro"/>
</dbReference>
<dbReference type="GO" id="GO:0097216">
    <property type="term" value="F:guanosine tetraphosphate binding"/>
    <property type="evidence" value="ECO:0007669"/>
    <property type="project" value="UniProtKB-ARBA"/>
</dbReference>
<dbReference type="GO" id="GO:0003746">
    <property type="term" value="F:translation elongation factor activity"/>
    <property type="evidence" value="ECO:0007669"/>
    <property type="project" value="UniProtKB-UniRule"/>
</dbReference>
<dbReference type="GO" id="GO:0032790">
    <property type="term" value="P:ribosome disassembly"/>
    <property type="evidence" value="ECO:0007669"/>
    <property type="project" value="TreeGrafter"/>
</dbReference>
<dbReference type="CDD" id="cd01886">
    <property type="entry name" value="EF-G"/>
    <property type="match status" value="1"/>
</dbReference>
<dbReference type="CDD" id="cd16262">
    <property type="entry name" value="EFG_III"/>
    <property type="match status" value="1"/>
</dbReference>
<dbReference type="CDD" id="cd01434">
    <property type="entry name" value="EFG_mtEFG1_IV"/>
    <property type="match status" value="1"/>
</dbReference>
<dbReference type="CDD" id="cd03713">
    <property type="entry name" value="EFG_mtEFG_C"/>
    <property type="match status" value="1"/>
</dbReference>
<dbReference type="CDD" id="cd04088">
    <property type="entry name" value="EFG_mtEFG_II"/>
    <property type="match status" value="1"/>
</dbReference>
<dbReference type="FunFam" id="2.40.30.10:FF:000006">
    <property type="entry name" value="Elongation factor G"/>
    <property type="match status" value="1"/>
</dbReference>
<dbReference type="FunFam" id="3.30.230.10:FF:000003">
    <property type="entry name" value="Elongation factor G"/>
    <property type="match status" value="1"/>
</dbReference>
<dbReference type="FunFam" id="3.30.70.240:FF:000001">
    <property type="entry name" value="Elongation factor G"/>
    <property type="match status" value="1"/>
</dbReference>
<dbReference type="FunFam" id="3.30.70.870:FF:000001">
    <property type="entry name" value="Elongation factor G"/>
    <property type="match status" value="1"/>
</dbReference>
<dbReference type="FunFam" id="3.40.50.300:FF:000029">
    <property type="entry name" value="Elongation factor G"/>
    <property type="match status" value="1"/>
</dbReference>
<dbReference type="Gene3D" id="3.30.230.10">
    <property type="match status" value="1"/>
</dbReference>
<dbReference type="Gene3D" id="3.30.70.240">
    <property type="match status" value="1"/>
</dbReference>
<dbReference type="Gene3D" id="3.30.70.870">
    <property type="entry name" value="Elongation Factor G (Translational Gtpase), domain 3"/>
    <property type="match status" value="1"/>
</dbReference>
<dbReference type="Gene3D" id="3.40.50.300">
    <property type="entry name" value="P-loop containing nucleotide triphosphate hydrolases"/>
    <property type="match status" value="1"/>
</dbReference>
<dbReference type="Gene3D" id="2.40.30.10">
    <property type="entry name" value="Translation factors"/>
    <property type="match status" value="1"/>
</dbReference>
<dbReference type="HAMAP" id="MF_00054_B">
    <property type="entry name" value="EF_G_EF_2_B"/>
    <property type="match status" value="1"/>
</dbReference>
<dbReference type="InterPro" id="IPR053905">
    <property type="entry name" value="EF-G-like_DII"/>
</dbReference>
<dbReference type="InterPro" id="IPR041095">
    <property type="entry name" value="EFG_II"/>
</dbReference>
<dbReference type="InterPro" id="IPR009022">
    <property type="entry name" value="EFG_III"/>
</dbReference>
<dbReference type="InterPro" id="IPR035647">
    <property type="entry name" value="EFG_III/V"/>
</dbReference>
<dbReference type="InterPro" id="IPR047872">
    <property type="entry name" value="EFG_IV"/>
</dbReference>
<dbReference type="InterPro" id="IPR035649">
    <property type="entry name" value="EFG_V"/>
</dbReference>
<dbReference type="InterPro" id="IPR000640">
    <property type="entry name" value="EFG_V-like"/>
</dbReference>
<dbReference type="InterPro" id="IPR031157">
    <property type="entry name" value="G_TR_CS"/>
</dbReference>
<dbReference type="InterPro" id="IPR027417">
    <property type="entry name" value="P-loop_NTPase"/>
</dbReference>
<dbReference type="InterPro" id="IPR020568">
    <property type="entry name" value="Ribosomal_Su5_D2-typ_SF"/>
</dbReference>
<dbReference type="InterPro" id="IPR014721">
    <property type="entry name" value="Ribsml_uS5_D2-typ_fold_subgr"/>
</dbReference>
<dbReference type="InterPro" id="IPR005225">
    <property type="entry name" value="Small_GTP-bd"/>
</dbReference>
<dbReference type="InterPro" id="IPR000795">
    <property type="entry name" value="T_Tr_GTP-bd_dom"/>
</dbReference>
<dbReference type="InterPro" id="IPR009000">
    <property type="entry name" value="Transl_B-barrel_sf"/>
</dbReference>
<dbReference type="InterPro" id="IPR004540">
    <property type="entry name" value="Transl_elong_EFG/EF2"/>
</dbReference>
<dbReference type="InterPro" id="IPR005517">
    <property type="entry name" value="Transl_elong_EFG/EF2_IV"/>
</dbReference>
<dbReference type="NCBIfam" id="TIGR00484">
    <property type="entry name" value="EF-G"/>
    <property type="match status" value="1"/>
</dbReference>
<dbReference type="NCBIfam" id="NF009381">
    <property type="entry name" value="PRK12740.1-5"/>
    <property type="match status" value="1"/>
</dbReference>
<dbReference type="NCBIfam" id="TIGR00231">
    <property type="entry name" value="small_GTP"/>
    <property type="match status" value="1"/>
</dbReference>
<dbReference type="PANTHER" id="PTHR43261:SF1">
    <property type="entry name" value="RIBOSOME-RELEASING FACTOR 2, MITOCHONDRIAL"/>
    <property type="match status" value="1"/>
</dbReference>
<dbReference type="PANTHER" id="PTHR43261">
    <property type="entry name" value="TRANSLATION ELONGATION FACTOR G-RELATED"/>
    <property type="match status" value="1"/>
</dbReference>
<dbReference type="Pfam" id="PF22042">
    <property type="entry name" value="EF-G_D2"/>
    <property type="match status" value="1"/>
</dbReference>
<dbReference type="Pfam" id="PF00679">
    <property type="entry name" value="EFG_C"/>
    <property type="match status" value="1"/>
</dbReference>
<dbReference type="Pfam" id="PF14492">
    <property type="entry name" value="EFG_III"/>
    <property type="match status" value="1"/>
</dbReference>
<dbReference type="Pfam" id="PF03764">
    <property type="entry name" value="EFG_IV"/>
    <property type="match status" value="1"/>
</dbReference>
<dbReference type="Pfam" id="PF00009">
    <property type="entry name" value="GTP_EFTU"/>
    <property type="match status" value="1"/>
</dbReference>
<dbReference type="PRINTS" id="PR00315">
    <property type="entry name" value="ELONGATNFCT"/>
</dbReference>
<dbReference type="SMART" id="SM00838">
    <property type="entry name" value="EFG_C"/>
    <property type="match status" value="1"/>
</dbReference>
<dbReference type="SMART" id="SM00889">
    <property type="entry name" value="EFG_IV"/>
    <property type="match status" value="1"/>
</dbReference>
<dbReference type="SUPFAM" id="SSF54980">
    <property type="entry name" value="EF-G C-terminal domain-like"/>
    <property type="match status" value="2"/>
</dbReference>
<dbReference type="SUPFAM" id="SSF52540">
    <property type="entry name" value="P-loop containing nucleoside triphosphate hydrolases"/>
    <property type="match status" value="1"/>
</dbReference>
<dbReference type="SUPFAM" id="SSF54211">
    <property type="entry name" value="Ribosomal protein S5 domain 2-like"/>
    <property type="match status" value="1"/>
</dbReference>
<dbReference type="SUPFAM" id="SSF50447">
    <property type="entry name" value="Translation proteins"/>
    <property type="match status" value="1"/>
</dbReference>
<dbReference type="PROSITE" id="PS00301">
    <property type="entry name" value="G_TR_1"/>
    <property type="match status" value="1"/>
</dbReference>
<dbReference type="PROSITE" id="PS51722">
    <property type="entry name" value="G_TR_2"/>
    <property type="match status" value="1"/>
</dbReference>
<comment type="function">
    <text evidence="1">Catalyzes the GTP-dependent ribosomal translocation step during translation elongation. During this step, the ribosome changes from the pre-translocational (PRE) to the post-translocational (POST) state as the newly formed A-site-bound peptidyl-tRNA and P-site-bound deacylated tRNA move to the P and E sites, respectively. Catalyzes the coordinated movement of the two tRNA molecules, the mRNA and conformational changes in the ribosome.</text>
</comment>
<comment type="subcellular location">
    <subcellularLocation>
        <location evidence="1">Cytoplasm</location>
    </subcellularLocation>
</comment>
<comment type="similarity">
    <text evidence="1">Belongs to the TRAFAC class translation factor GTPase superfamily. Classic translation factor GTPase family. EF-G/EF-2 subfamily.</text>
</comment>
<protein>
    <recommendedName>
        <fullName evidence="1">Elongation factor G 2</fullName>
        <shortName evidence="1">EF-G 2</shortName>
    </recommendedName>
</protein>
<reference key="1">
    <citation type="journal article" date="2002" name="Environ. Microbiol.">
        <title>Complete genome sequence and comparative analysis of the metabolically versatile Pseudomonas putida KT2440.</title>
        <authorList>
            <person name="Nelson K.E."/>
            <person name="Weinel C."/>
            <person name="Paulsen I.T."/>
            <person name="Dodson R.J."/>
            <person name="Hilbert H."/>
            <person name="Martins dos Santos V.A.P."/>
            <person name="Fouts D.E."/>
            <person name="Gill S.R."/>
            <person name="Pop M."/>
            <person name="Holmes M."/>
            <person name="Brinkac L.M."/>
            <person name="Beanan M.J."/>
            <person name="DeBoy R.T."/>
            <person name="Daugherty S.C."/>
            <person name="Kolonay J.F."/>
            <person name="Madupu R."/>
            <person name="Nelson W.C."/>
            <person name="White O."/>
            <person name="Peterson J.D."/>
            <person name="Khouri H.M."/>
            <person name="Hance I."/>
            <person name="Chris Lee P."/>
            <person name="Holtzapple E.K."/>
            <person name="Scanlan D."/>
            <person name="Tran K."/>
            <person name="Moazzez A."/>
            <person name="Utterback T.R."/>
            <person name="Rizzo M."/>
            <person name="Lee K."/>
            <person name="Kosack D."/>
            <person name="Moestl D."/>
            <person name="Wedler H."/>
            <person name="Lauber J."/>
            <person name="Stjepandic D."/>
            <person name="Hoheisel J."/>
            <person name="Straetz M."/>
            <person name="Heim S."/>
            <person name="Kiewitz C."/>
            <person name="Eisen J.A."/>
            <person name="Timmis K.N."/>
            <person name="Duesterhoeft A."/>
            <person name="Tuemmler B."/>
            <person name="Fraser C.M."/>
        </authorList>
    </citation>
    <scope>NUCLEOTIDE SEQUENCE [LARGE SCALE GENOMIC DNA]</scope>
    <source>
        <strain>ATCC 47054 / DSM 6125 / CFBP 8728 / NCIMB 11950 / KT2440</strain>
    </source>
</reference>
<proteinExistence type="evidence at protein level"/>
<keyword id="KW-0002">3D-structure</keyword>
<keyword id="KW-0963">Cytoplasm</keyword>
<keyword id="KW-0251">Elongation factor</keyword>
<keyword id="KW-0342">GTP-binding</keyword>
<keyword id="KW-0547">Nucleotide-binding</keyword>
<keyword id="KW-0648">Protein biosynthesis</keyword>
<keyword id="KW-1185">Reference proteome</keyword>